<gene>
    <name evidence="1" type="primary">gcvT</name>
    <name type="ordered locus">FTT_0407</name>
</gene>
<proteinExistence type="inferred from homology"/>
<evidence type="ECO:0000255" key="1">
    <source>
        <dbReference type="HAMAP-Rule" id="MF_00259"/>
    </source>
</evidence>
<reference key="1">
    <citation type="journal article" date="2005" name="Nat. Genet.">
        <title>The complete genome sequence of Francisella tularensis, the causative agent of tularemia.</title>
        <authorList>
            <person name="Larsson P."/>
            <person name="Oyston P.C.F."/>
            <person name="Chain P."/>
            <person name="Chu M.C."/>
            <person name="Duffield M."/>
            <person name="Fuxelius H.-H."/>
            <person name="Garcia E."/>
            <person name="Haelltorp G."/>
            <person name="Johansson D."/>
            <person name="Isherwood K.E."/>
            <person name="Karp P.D."/>
            <person name="Larsson E."/>
            <person name="Liu Y."/>
            <person name="Michell S."/>
            <person name="Prior J."/>
            <person name="Prior R."/>
            <person name="Malfatti S."/>
            <person name="Sjoestedt A."/>
            <person name="Svensson K."/>
            <person name="Thompson N."/>
            <person name="Vergez L."/>
            <person name="Wagg J.K."/>
            <person name="Wren B.W."/>
            <person name="Lindler L.E."/>
            <person name="Andersson S.G.E."/>
            <person name="Forsman M."/>
            <person name="Titball R.W."/>
        </authorList>
    </citation>
    <scope>NUCLEOTIDE SEQUENCE [LARGE SCALE GENOMIC DNA]</scope>
    <source>
        <strain>SCHU S4 / Schu 4</strain>
    </source>
</reference>
<protein>
    <recommendedName>
        <fullName evidence="1">Aminomethyltransferase</fullName>
        <ecNumber evidence="1">2.1.2.10</ecNumber>
    </recommendedName>
    <alternativeName>
        <fullName evidence="1">Glycine cleavage system T protein</fullName>
    </alternativeName>
</protein>
<organism>
    <name type="scientific">Francisella tularensis subsp. tularensis (strain SCHU S4 / Schu 4)</name>
    <dbReference type="NCBI Taxonomy" id="177416"/>
    <lineage>
        <taxon>Bacteria</taxon>
        <taxon>Pseudomonadati</taxon>
        <taxon>Pseudomonadota</taxon>
        <taxon>Gammaproteobacteria</taxon>
        <taxon>Thiotrichales</taxon>
        <taxon>Francisellaceae</taxon>
        <taxon>Francisella</taxon>
    </lineage>
</organism>
<dbReference type="EC" id="2.1.2.10" evidence="1"/>
<dbReference type="EMBL" id="AJ749949">
    <property type="protein sequence ID" value="CAG45040.1"/>
    <property type="molecule type" value="Genomic_DNA"/>
</dbReference>
<dbReference type="RefSeq" id="WP_003020116.1">
    <property type="nucleotide sequence ID" value="NC_006570.2"/>
</dbReference>
<dbReference type="RefSeq" id="YP_169452.1">
    <property type="nucleotide sequence ID" value="NC_006570.2"/>
</dbReference>
<dbReference type="SMR" id="Q5NHP0"/>
<dbReference type="IntAct" id="Q5NHP0">
    <property type="interactions" value="3"/>
</dbReference>
<dbReference type="STRING" id="177416.FTT_0407"/>
<dbReference type="DNASU" id="3192518"/>
<dbReference type="EnsemblBacteria" id="CAG45040">
    <property type="protein sequence ID" value="CAG45040"/>
    <property type="gene ID" value="FTT_0407"/>
</dbReference>
<dbReference type="KEGG" id="ftu:FTT_0407"/>
<dbReference type="eggNOG" id="COG0404">
    <property type="taxonomic scope" value="Bacteria"/>
</dbReference>
<dbReference type="OrthoDB" id="9774591at2"/>
<dbReference type="BRENDA" id="1.4.1.27">
    <property type="organism ID" value="14771"/>
</dbReference>
<dbReference type="Proteomes" id="UP000001174">
    <property type="component" value="Chromosome"/>
</dbReference>
<dbReference type="GO" id="GO:0005829">
    <property type="term" value="C:cytosol"/>
    <property type="evidence" value="ECO:0007669"/>
    <property type="project" value="TreeGrafter"/>
</dbReference>
<dbReference type="GO" id="GO:0005960">
    <property type="term" value="C:glycine cleavage complex"/>
    <property type="evidence" value="ECO:0007669"/>
    <property type="project" value="InterPro"/>
</dbReference>
<dbReference type="GO" id="GO:0004047">
    <property type="term" value="F:aminomethyltransferase activity"/>
    <property type="evidence" value="ECO:0007669"/>
    <property type="project" value="UniProtKB-UniRule"/>
</dbReference>
<dbReference type="GO" id="GO:0008483">
    <property type="term" value="F:transaminase activity"/>
    <property type="evidence" value="ECO:0007669"/>
    <property type="project" value="UniProtKB-KW"/>
</dbReference>
<dbReference type="GO" id="GO:0019464">
    <property type="term" value="P:glycine decarboxylation via glycine cleavage system"/>
    <property type="evidence" value="ECO:0007669"/>
    <property type="project" value="UniProtKB-UniRule"/>
</dbReference>
<dbReference type="FunFam" id="3.30.70.1400:FF:000001">
    <property type="entry name" value="Aminomethyltransferase"/>
    <property type="match status" value="1"/>
</dbReference>
<dbReference type="Gene3D" id="2.40.30.110">
    <property type="entry name" value="Aminomethyltransferase beta-barrel domains"/>
    <property type="match status" value="1"/>
</dbReference>
<dbReference type="Gene3D" id="3.30.70.1400">
    <property type="entry name" value="Aminomethyltransferase beta-barrel domains"/>
    <property type="match status" value="1"/>
</dbReference>
<dbReference type="Gene3D" id="4.10.1250.10">
    <property type="entry name" value="Aminomethyltransferase fragment"/>
    <property type="match status" value="1"/>
</dbReference>
<dbReference type="Gene3D" id="3.30.1360.120">
    <property type="entry name" value="Probable tRNA modification gtpase trme, domain 1"/>
    <property type="match status" value="1"/>
</dbReference>
<dbReference type="HAMAP" id="MF_00259">
    <property type="entry name" value="GcvT"/>
    <property type="match status" value="1"/>
</dbReference>
<dbReference type="InterPro" id="IPR006223">
    <property type="entry name" value="GCS_T"/>
</dbReference>
<dbReference type="InterPro" id="IPR022903">
    <property type="entry name" value="GCS_T_bac"/>
</dbReference>
<dbReference type="InterPro" id="IPR013977">
    <property type="entry name" value="GCST_C"/>
</dbReference>
<dbReference type="InterPro" id="IPR006222">
    <property type="entry name" value="GCV_T_N"/>
</dbReference>
<dbReference type="InterPro" id="IPR028896">
    <property type="entry name" value="GcvT/YgfZ/DmdA"/>
</dbReference>
<dbReference type="InterPro" id="IPR029043">
    <property type="entry name" value="GcvT/YgfZ_C"/>
</dbReference>
<dbReference type="InterPro" id="IPR027266">
    <property type="entry name" value="TrmE/GcvT_dom1"/>
</dbReference>
<dbReference type="NCBIfam" id="TIGR00528">
    <property type="entry name" value="gcvT"/>
    <property type="match status" value="1"/>
</dbReference>
<dbReference type="NCBIfam" id="NF001567">
    <property type="entry name" value="PRK00389.1"/>
    <property type="match status" value="1"/>
</dbReference>
<dbReference type="PANTHER" id="PTHR43757">
    <property type="entry name" value="AMINOMETHYLTRANSFERASE"/>
    <property type="match status" value="1"/>
</dbReference>
<dbReference type="PANTHER" id="PTHR43757:SF2">
    <property type="entry name" value="AMINOMETHYLTRANSFERASE, MITOCHONDRIAL"/>
    <property type="match status" value="1"/>
</dbReference>
<dbReference type="Pfam" id="PF01571">
    <property type="entry name" value="GCV_T"/>
    <property type="match status" value="1"/>
</dbReference>
<dbReference type="Pfam" id="PF08669">
    <property type="entry name" value="GCV_T_C"/>
    <property type="match status" value="1"/>
</dbReference>
<dbReference type="PIRSF" id="PIRSF006487">
    <property type="entry name" value="GcvT"/>
    <property type="match status" value="1"/>
</dbReference>
<dbReference type="SUPFAM" id="SSF101790">
    <property type="entry name" value="Aminomethyltransferase beta-barrel domain"/>
    <property type="match status" value="1"/>
</dbReference>
<dbReference type="SUPFAM" id="SSF103025">
    <property type="entry name" value="Folate-binding domain"/>
    <property type="match status" value="1"/>
</dbReference>
<name>GCST_FRATT</name>
<sequence>MLKTPLYESHMAANAKMVDFSGWSMPINYGSQIQEHNNVREDCGIFDVSHMLAVDIQGSEAEKFLRYLLANDVAKLQENKAQYGCMLNHDAGIVDDLITYKVTDEHFRIVVNAGNRESDVAWFNQNAQNFDVAITPQTDLAIVAVQGPKAVAVIKRVVTKEIATEIEALLPFSFKFFSKWMVARTGYTGEDGFEVILPATQVKKFWDSLLENGAQPAGLGARDTLRLEAGMHLYGADMDTSTTPLERGLGWSVDLSDEHRDFIGKKAYFAKKAQGVDTKWVGVVLKTKGVLRAGQEIDFDNGEKGYITSGSFSPTLKVAIGLAYVPKQADNPVVNIRGKELEVELVKPKFVKNGKSLI</sequence>
<keyword id="KW-0032">Aminotransferase</keyword>
<keyword id="KW-1185">Reference proteome</keyword>
<keyword id="KW-0808">Transferase</keyword>
<comment type="function">
    <text evidence="1">The glycine cleavage system catalyzes the degradation of glycine.</text>
</comment>
<comment type="catalytic activity">
    <reaction evidence="1">
        <text>N(6)-[(R)-S(8)-aminomethyldihydrolipoyl]-L-lysyl-[protein] + (6S)-5,6,7,8-tetrahydrofolate = N(6)-[(R)-dihydrolipoyl]-L-lysyl-[protein] + (6R)-5,10-methylene-5,6,7,8-tetrahydrofolate + NH4(+)</text>
        <dbReference type="Rhea" id="RHEA:16945"/>
        <dbReference type="Rhea" id="RHEA-COMP:10475"/>
        <dbReference type="Rhea" id="RHEA-COMP:10492"/>
        <dbReference type="ChEBI" id="CHEBI:15636"/>
        <dbReference type="ChEBI" id="CHEBI:28938"/>
        <dbReference type="ChEBI" id="CHEBI:57453"/>
        <dbReference type="ChEBI" id="CHEBI:83100"/>
        <dbReference type="ChEBI" id="CHEBI:83143"/>
        <dbReference type="EC" id="2.1.2.10"/>
    </reaction>
</comment>
<comment type="subunit">
    <text evidence="1">The glycine cleavage system is composed of four proteins: P, T, L and H.</text>
</comment>
<comment type="similarity">
    <text evidence="1">Belongs to the GcvT family.</text>
</comment>
<accession>Q5NHP0</accession>
<feature type="chain" id="PRO_0000122558" description="Aminomethyltransferase">
    <location>
        <begin position="1"/>
        <end position="358"/>
    </location>
</feature>